<gene>
    <name evidence="1" type="primary">hpr</name>
    <name type="ordered locus">BLi01078</name>
    <name type="ordered locus">BL02906</name>
</gene>
<name>HPR_BACLD</name>
<dbReference type="EMBL" id="CP000002">
    <property type="protein sequence ID" value="AAU22639.1"/>
    <property type="molecule type" value="Genomic_DNA"/>
</dbReference>
<dbReference type="EMBL" id="AE017333">
    <property type="protein sequence ID" value="AAU39986.1"/>
    <property type="molecule type" value="Genomic_DNA"/>
</dbReference>
<dbReference type="RefSeq" id="WP_003180254.1">
    <property type="nucleotide sequence ID" value="NC_006322.1"/>
</dbReference>
<dbReference type="SMR" id="Q65LS8"/>
<dbReference type="STRING" id="279010.BL02906"/>
<dbReference type="KEGG" id="bld:BLi01078"/>
<dbReference type="KEGG" id="bli:BL02906"/>
<dbReference type="eggNOG" id="COG1846">
    <property type="taxonomic scope" value="Bacteria"/>
</dbReference>
<dbReference type="HOGENOM" id="CLU_115790_0_0_9"/>
<dbReference type="Proteomes" id="UP000000606">
    <property type="component" value="Chromosome"/>
</dbReference>
<dbReference type="GO" id="GO:0003677">
    <property type="term" value="F:DNA binding"/>
    <property type="evidence" value="ECO:0007669"/>
    <property type="project" value="UniProtKB-UniRule"/>
</dbReference>
<dbReference type="GO" id="GO:0003700">
    <property type="term" value="F:DNA-binding transcription factor activity"/>
    <property type="evidence" value="ECO:0007669"/>
    <property type="project" value="UniProtKB-UniRule"/>
</dbReference>
<dbReference type="GO" id="GO:0045892">
    <property type="term" value="P:negative regulation of DNA-templated transcription"/>
    <property type="evidence" value="ECO:0007669"/>
    <property type="project" value="UniProtKB-UniRule"/>
</dbReference>
<dbReference type="GO" id="GO:0006950">
    <property type="term" value="P:response to stress"/>
    <property type="evidence" value="ECO:0007669"/>
    <property type="project" value="TreeGrafter"/>
</dbReference>
<dbReference type="GO" id="GO:0030435">
    <property type="term" value="P:sporulation resulting in formation of a cellular spore"/>
    <property type="evidence" value="ECO:0007669"/>
    <property type="project" value="UniProtKB-UniRule"/>
</dbReference>
<dbReference type="Gene3D" id="1.10.10.10">
    <property type="entry name" value="Winged helix-like DNA-binding domain superfamily/Winged helix DNA-binding domain"/>
    <property type="match status" value="1"/>
</dbReference>
<dbReference type="HAMAP" id="MF_01911">
    <property type="entry name" value="HTH_type_Hpr"/>
    <property type="match status" value="1"/>
</dbReference>
<dbReference type="InterPro" id="IPR000835">
    <property type="entry name" value="HTH_MarR-typ"/>
</dbReference>
<dbReference type="InterPro" id="IPR023488">
    <property type="entry name" value="HTH_tscrpt_reg_Hpr"/>
</dbReference>
<dbReference type="InterPro" id="IPR039422">
    <property type="entry name" value="MarR/SlyA-like"/>
</dbReference>
<dbReference type="InterPro" id="IPR023187">
    <property type="entry name" value="Tscrpt_reg_MarR-type_CS"/>
</dbReference>
<dbReference type="InterPro" id="IPR036388">
    <property type="entry name" value="WH-like_DNA-bd_sf"/>
</dbReference>
<dbReference type="InterPro" id="IPR036390">
    <property type="entry name" value="WH_DNA-bd_sf"/>
</dbReference>
<dbReference type="NCBIfam" id="NF010349">
    <property type="entry name" value="PRK13777.1"/>
    <property type="match status" value="1"/>
</dbReference>
<dbReference type="PANTHER" id="PTHR33164:SF58">
    <property type="entry name" value="DNA-BINDING TRANSCRIPTIONAL REPRESSOR SCOC"/>
    <property type="match status" value="1"/>
</dbReference>
<dbReference type="PANTHER" id="PTHR33164">
    <property type="entry name" value="TRANSCRIPTIONAL REGULATOR, MARR FAMILY"/>
    <property type="match status" value="1"/>
</dbReference>
<dbReference type="Pfam" id="PF01047">
    <property type="entry name" value="MarR"/>
    <property type="match status" value="1"/>
</dbReference>
<dbReference type="SMART" id="SM00347">
    <property type="entry name" value="HTH_MARR"/>
    <property type="match status" value="1"/>
</dbReference>
<dbReference type="SUPFAM" id="SSF46785">
    <property type="entry name" value="Winged helix' DNA-binding domain"/>
    <property type="match status" value="1"/>
</dbReference>
<dbReference type="PROSITE" id="PS01117">
    <property type="entry name" value="HTH_MARR_1"/>
    <property type="match status" value="1"/>
</dbReference>
<dbReference type="PROSITE" id="PS50995">
    <property type="entry name" value="HTH_MARR_2"/>
    <property type="match status" value="1"/>
</dbReference>
<protein>
    <recommendedName>
        <fullName evidence="1">HTH-type transcriptional regulator Hpr</fullName>
    </recommendedName>
    <alternativeName>
        <fullName evidence="1">Protease production regulatory protein Hpr</fullName>
    </alternativeName>
</protein>
<proteinExistence type="inferred from homology"/>
<feature type="chain" id="PRO_0000343624" description="HTH-type transcriptional regulator Hpr">
    <location>
        <begin position="1"/>
        <end position="206"/>
    </location>
</feature>
<feature type="domain" description="HTH marR-type" evidence="1">
    <location>
        <begin position="13"/>
        <end position="157"/>
    </location>
</feature>
<feature type="DNA-binding region" description="H-T-H motif" evidence="1">
    <location>
        <begin position="63"/>
        <end position="86"/>
    </location>
</feature>
<feature type="region of interest" description="Disordered" evidence="2">
    <location>
        <begin position="177"/>
        <end position="206"/>
    </location>
</feature>
<feature type="compositionally biased region" description="Basic and acidic residues" evidence="2">
    <location>
        <begin position="178"/>
        <end position="206"/>
    </location>
</feature>
<keyword id="KW-0238">DNA-binding</keyword>
<keyword id="KW-1185">Reference proteome</keyword>
<keyword id="KW-0678">Repressor</keyword>
<keyword id="KW-0749">Sporulation</keyword>
<keyword id="KW-0804">Transcription</keyword>
<keyword id="KW-0805">Transcription regulation</keyword>
<evidence type="ECO:0000255" key="1">
    <source>
        <dbReference type="HAMAP-Rule" id="MF_01911"/>
    </source>
</evidence>
<evidence type="ECO:0000256" key="2">
    <source>
        <dbReference type="SAM" id="MobiDB-lite"/>
    </source>
</evidence>
<reference key="1">
    <citation type="journal article" date="2004" name="J. Mol. Microbiol. Biotechnol.">
        <title>The complete genome sequence of Bacillus licheniformis DSM13, an organism with great industrial potential.</title>
        <authorList>
            <person name="Veith B."/>
            <person name="Herzberg C."/>
            <person name="Steckel S."/>
            <person name="Feesche J."/>
            <person name="Maurer K.H."/>
            <person name="Ehrenreich P."/>
            <person name="Baeumer S."/>
            <person name="Henne A."/>
            <person name="Liesegang H."/>
            <person name="Merkl R."/>
            <person name="Ehrenreich A."/>
            <person name="Gottschalk G."/>
        </authorList>
    </citation>
    <scope>NUCLEOTIDE SEQUENCE [LARGE SCALE GENOMIC DNA]</scope>
    <source>
        <strain>ATCC 14580 / DSM 13 / JCM 2505 / CCUG 7422 / NBRC 12200 / NCIMB 9375 / NCTC 10341 / NRRL NRS-1264 / Gibson 46</strain>
    </source>
</reference>
<reference key="2">
    <citation type="journal article" date="2004" name="Genome Biol.">
        <title>Complete genome sequence of the industrial bacterium Bacillus licheniformis and comparisons with closely related Bacillus species.</title>
        <authorList>
            <person name="Rey M.W."/>
            <person name="Ramaiya P."/>
            <person name="Nelson B.A."/>
            <person name="Brody-Karpin S.D."/>
            <person name="Zaretsky E.J."/>
            <person name="Tang M."/>
            <person name="Lopez de Leon A."/>
            <person name="Xiang H."/>
            <person name="Gusti V."/>
            <person name="Clausen I.G."/>
            <person name="Olsen P.B."/>
            <person name="Rasmussen M.D."/>
            <person name="Andersen J.T."/>
            <person name="Joergensen P.L."/>
            <person name="Larsen T.S."/>
            <person name="Sorokin A."/>
            <person name="Bolotin A."/>
            <person name="Lapidus A."/>
            <person name="Galleron N."/>
            <person name="Ehrlich S.D."/>
            <person name="Berka R.M."/>
        </authorList>
    </citation>
    <scope>NUCLEOTIDE SEQUENCE [LARGE SCALE GENOMIC DNA]</scope>
    <source>
        <strain>ATCC 14580 / DSM 13 / JCM 2505 / CCUG 7422 / NBRC 12200 / NCIMB 9375 / NCTC 10341 / NRRL NRS-1264 / Gibson 46</strain>
    </source>
</reference>
<sequence length="206" mass="24129">MNRAEEPYTVKEALLFSQRMAQLSKALWKSIEKDWQQWIKPYDLNINEHHILWIAYQLNGASISEIAKFGVMHVSTAFNFSKKLEERGYLEFSKKLNDKRNTYIQLTPKGEEVFLKILESYDPTRNAVLKGAQPLHQLYGKFPEIVEMMSIIRHIYGDDFMEIFEKSFSNIENEFTSEEGKMKKKQEAKEAGESIEVDKPLEPLKN</sequence>
<accession>Q65LS8</accession>
<accession>Q62X69</accession>
<organism>
    <name type="scientific">Bacillus licheniformis (strain ATCC 14580 / DSM 13 / JCM 2505 / CCUG 7422 / NBRC 12200 / NCIMB 9375 / NCTC 10341 / NRRL NRS-1264 / Gibson 46)</name>
    <dbReference type="NCBI Taxonomy" id="279010"/>
    <lineage>
        <taxon>Bacteria</taxon>
        <taxon>Bacillati</taxon>
        <taxon>Bacillota</taxon>
        <taxon>Bacilli</taxon>
        <taxon>Bacillales</taxon>
        <taxon>Bacillaceae</taxon>
        <taxon>Bacillus</taxon>
    </lineage>
</organism>
<comment type="function">
    <text evidence="1">Negative regulator of protease production and sporulation.</text>
</comment>
<comment type="subunit">
    <text evidence="1">Homodimer.</text>
</comment>